<gene>
    <name type="ordered locus">BL0705</name>
</gene>
<organism>
    <name type="scientific">Bifidobacterium longum (strain NCC 2705)</name>
    <dbReference type="NCBI Taxonomy" id="206672"/>
    <lineage>
        <taxon>Bacteria</taxon>
        <taxon>Bacillati</taxon>
        <taxon>Actinomycetota</taxon>
        <taxon>Actinomycetes</taxon>
        <taxon>Bifidobacteriales</taxon>
        <taxon>Bifidobacteriaceae</taxon>
        <taxon>Bifidobacterium</taxon>
    </lineage>
</organism>
<feature type="chain" id="PRO_0000107690" description="Nucleotide-binding protein BL0705">
    <location>
        <begin position="1"/>
        <end position="328"/>
    </location>
</feature>
<feature type="region of interest" description="Disordered" evidence="2">
    <location>
        <begin position="1"/>
        <end position="35"/>
    </location>
</feature>
<feature type="compositionally biased region" description="Low complexity" evidence="2">
    <location>
        <begin position="13"/>
        <end position="29"/>
    </location>
</feature>
<feature type="binding site" evidence="1">
    <location>
        <begin position="46"/>
        <end position="53"/>
    </location>
    <ligand>
        <name>ATP</name>
        <dbReference type="ChEBI" id="CHEBI:30616"/>
    </ligand>
</feature>
<feature type="binding site" evidence="1">
    <location>
        <begin position="101"/>
        <end position="104"/>
    </location>
    <ligand>
        <name>GTP</name>
        <dbReference type="ChEBI" id="CHEBI:37565"/>
    </ligand>
</feature>
<evidence type="ECO:0000255" key="1">
    <source>
        <dbReference type="HAMAP-Rule" id="MF_00636"/>
    </source>
</evidence>
<evidence type="ECO:0000256" key="2">
    <source>
        <dbReference type="SAM" id="MobiDB-lite"/>
    </source>
</evidence>
<comment type="function">
    <text evidence="1">Displays ATPase and GTPase activities.</text>
</comment>
<comment type="similarity">
    <text evidence="1">Belongs to the RapZ-like family.</text>
</comment>
<protein>
    <recommendedName>
        <fullName evidence="1">Nucleotide-binding protein BL0705</fullName>
    </recommendedName>
</protein>
<sequence length="328" mass="35970">MNQQTTNRDTGEAAATNAPANSATSTSTPDNQPTPLDAFEVLLITGMSGAGRSHAADCVEDMGWYVVDNLPPKLLIPLVDMMTTSGSGSESGVHKLAAVIDVRSSYFDELAAVLGHLDDLGVKTRILFLDASNEVLIKRYESVRRPHPLQHGNRLIDGILEERHLLEDLKERADWVIDTSSLSIHQLSTKLYEAMLGSGPTTVAVHIFSFGFKYGMPIDADFVADVRFLPNPFWVPSLRELTGRDKPVADYVLSSKGAKEFLDAYEKAIEIALEGYAQEDKHYVTIAVGCTGGQHRSVAMSEELARRLRAHGLNVTVSAREQHKRHSS</sequence>
<reference key="1">
    <citation type="journal article" date="2002" name="Proc. Natl. Acad. Sci. U.S.A.">
        <title>The genome sequence of Bifidobacterium longum reflects its adaptation to the human gastrointestinal tract.</title>
        <authorList>
            <person name="Schell M.A."/>
            <person name="Karmirantzou M."/>
            <person name="Snel B."/>
            <person name="Vilanova D."/>
            <person name="Berger B."/>
            <person name="Pessi G."/>
            <person name="Zwahlen M.-C."/>
            <person name="Desiere F."/>
            <person name="Bork P."/>
            <person name="Delley M."/>
            <person name="Pridmore R.D."/>
            <person name="Arigoni F."/>
        </authorList>
    </citation>
    <scope>NUCLEOTIDE SEQUENCE [LARGE SCALE GENOMIC DNA]</scope>
    <source>
        <strain>NCC 2705</strain>
    </source>
</reference>
<dbReference type="EMBL" id="AE014295">
    <property type="protein sequence ID" value="AAN24524.1"/>
    <property type="molecule type" value="Genomic_DNA"/>
</dbReference>
<dbReference type="RefSeq" id="NP_695888.1">
    <property type="nucleotide sequence ID" value="NC_004307.2"/>
</dbReference>
<dbReference type="SMR" id="Q8G6D8"/>
<dbReference type="STRING" id="206672.BL0705"/>
<dbReference type="EnsemblBacteria" id="AAN24524">
    <property type="protein sequence ID" value="AAN24524"/>
    <property type="gene ID" value="BL0705"/>
</dbReference>
<dbReference type="KEGG" id="blo:BL0705"/>
<dbReference type="PATRIC" id="fig|206672.9.peg.404"/>
<dbReference type="HOGENOM" id="CLU_059558_0_0_11"/>
<dbReference type="OrthoDB" id="9784461at2"/>
<dbReference type="PhylomeDB" id="Q8G6D8"/>
<dbReference type="Proteomes" id="UP000000439">
    <property type="component" value="Chromosome"/>
</dbReference>
<dbReference type="GO" id="GO:0005524">
    <property type="term" value="F:ATP binding"/>
    <property type="evidence" value="ECO:0007669"/>
    <property type="project" value="UniProtKB-UniRule"/>
</dbReference>
<dbReference type="GO" id="GO:0005525">
    <property type="term" value="F:GTP binding"/>
    <property type="evidence" value="ECO:0007669"/>
    <property type="project" value="UniProtKB-UniRule"/>
</dbReference>
<dbReference type="Gene3D" id="3.40.50.300">
    <property type="entry name" value="P-loop containing nucleotide triphosphate hydrolases"/>
    <property type="match status" value="1"/>
</dbReference>
<dbReference type="HAMAP" id="MF_00636">
    <property type="entry name" value="RapZ_like"/>
    <property type="match status" value="1"/>
</dbReference>
<dbReference type="InterPro" id="IPR027417">
    <property type="entry name" value="P-loop_NTPase"/>
</dbReference>
<dbReference type="InterPro" id="IPR005337">
    <property type="entry name" value="RapZ-like"/>
</dbReference>
<dbReference type="InterPro" id="IPR053930">
    <property type="entry name" value="RapZ-like_N"/>
</dbReference>
<dbReference type="InterPro" id="IPR053931">
    <property type="entry name" value="RapZ_C"/>
</dbReference>
<dbReference type="NCBIfam" id="NF003828">
    <property type="entry name" value="PRK05416.1"/>
    <property type="match status" value="1"/>
</dbReference>
<dbReference type="PANTHER" id="PTHR30448">
    <property type="entry name" value="RNASE ADAPTER PROTEIN RAPZ"/>
    <property type="match status" value="1"/>
</dbReference>
<dbReference type="PANTHER" id="PTHR30448:SF0">
    <property type="entry name" value="RNASE ADAPTER PROTEIN RAPZ"/>
    <property type="match status" value="1"/>
</dbReference>
<dbReference type="Pfam" id="PF22740">
    <property type="entry name" value="PapZ_C"/>
    <property type="match status" value="1"/>
</dbReference>
<dbReference type="Pfam" id="PF03668">
    <property type="entry name" value="RapZ-like_N"/>
    <property type="match status" value="1"/>
</dbReference>
<dbReference type="PIRSF" id="PIRSF005052">
    <property type="entry name" value="P-loopkin"/>
    <property type="match status" value="1"/>
</dbReference>
<dbReference type="SUPFAM" id="SSF52540">
    <property type="entry name" value="P-loop containing nucleoside triphosphate hydrolases"/>
    <property type="match status" value="1"/>
</dbReference>
<accession>Q8G6D8</accession>
<name>Y705_BIFLO</name>
<keyword id="KW-0067">ATP-binding</keyword>
<keyword id="KW-0342">GTP-binding</keyword>
<keyword id="KW-0547">Nucleotide-binding</keyword>
<keyword id="KW-1185">Reference proteome</keyword>
<proteinExistence type="inferred from homology"/>